<accession>P16110</accession>
<reference key="1">
    <citation type="journal article" date="1989" name="J. Exp. Med.">
        <title>The Mac-2 antigen is a galactose-specific lectin that binds IgE.</title>
        <authorList>
            <person name="Cherayil B.J."/>
            <person name="Weiner S.J."/>
            <person name="Pillai S."/>
        </authorList>
    </citation>
    <scope>NUCLEOTIDE SEQUENCE [MRNA]</scope>
    <source>
        <strain>DBA/2J</strain>
        <tissue>Macrophage</tissue>
    </source>
</reference>
<reference key="2">
    <citation type="journal article" date="1988" name="J. Biol. Chem.">
        <title>Carbohydrate binding protein 35. Complementary DNA sequence reveals homology with proteins of the heterogeneous nuclear RNP.</title>
        <authorList>
            <person name="Jia S."/>
            <person name="Wang J.L."/>
        </authorList>
    </citation>
    <scope>NUCLEOTIDE SEQUENCE [MRNA]</scope>
</reference>
<reference key="3">
    <citation type="journal article" date="1989" name="Cancer Res.">
        <title>Identification of the metastasis-associated, galactoside-binding lectin as a chimeric gene product with homology to an IgE-binding protein.</title>
        <authorList>
            <person name="Raz A."/>
            <person name="Pazerini G."/>
            <person name="Carmi P."/>
        </authorList>
    </citation>
    <scope>NUCLEOTIDE SEQUENCE [MRNA]</scope>
</reference>
<reference key="4">
    <citation type="journal article" date="1990" name="J. Biol. Chem.">
        <title>The major non-integrin laminin binding protein of macrophages is identical to carbohydrate binding protein 35 (Mac-2).</title>
        <authorList>
            <person name="Woo H.-J."/>
            <person name="Shaw L.M."/>
            <person name="Messier J.M."/>
            <person name="Mercurio A.M."/>
        </authorList>
    </citation>
    <scope>PROTEIN SEQUENCE OF 159-163; 166-175 AND 214-226</scope>
</reference>
<reference key="5">
    <citation type="submission" date="2007-04" db="UniProtKB">
        <authorList>
            <person name="Lubec G."/>
            <person name="Kang S.U."/>
        </authorList>
    </citation>
    <scope>PROTEIN SEQUENCE OF 184-190 AND 201-213</scope>
    <scope>IDENTIFICATION BY MASS SPECTROMETRY</scope>
    <source>
        <strain>C57BL/6J</strain>
        <tissue>Brain</tissue>
    </source>
</reference>
<reference key="6">
    <citation type="journal article" date="1991" name="J. Biol. Chem.">
        <title>Carbohydrate-binding protein 35 (Mac-2), a laminin-binding lectin, forms functional dimers using cysteine 186.</title>
        <authorList>
            <person name="Woo H.-J."/>
            <person name="Lotz M.M."/>
            <person name="Jung J.U."/>
            <person name="Mercurio A.M."/>
        </authorList>
    </citation>
    <scope>DISULFIDE BOND</scope>
</reference>
<reference key="7">
    <citation type="journal article" date="2000" name="FEBS Lett.">
        <title>Interaction of a novel cysteine and histidine-rich cytoplasmic protein with galectin-3 in a carbohydrate-independent manner galectin 3.</title>
        <authorList>
            <person name="Menon R.P."/>
            <person name="Strom M."/>
            <person name="Hughes R.C."/>
        </authorList>
    </citation>
    <scope>INTERACTION WITH ZFTRAF1</scope>
</reference>
<reference key="8">
    <citation type="journal article" date="2004" name="Biochem. J.">
        <title>Nucling mediates apoptosis by inhibiting expression of galectin-3 through interference with nuclear factor kappaB signalling.</title>
        <authorList>
            <person name="Liu L."/>
            <person name="Sakai T."/>
            <person name="Sano N."/>
            <person name="Fukui K."/>
        </authorList>
    </citation>
    <scope>INTERACTION WITH UACA</scope>
</reference>
<reference key="9">
    <citation type="journal article" date="2004" name="Mol. Biol. Cell">
        <title>NG2 proteoglycan promotes endothelial cell motility and angiogenesis via engagement of galectin-3 and alpha3beta1 integrin.</title>
        <authorList>
            <person name="Fukushi J."/>
            <person name="Makagiansar I.T."/>
            <person name="Stallcup W.B."/>
        </authorList>
    </citation>
    <scope>SUBCELLULAR LOCATION</scope>
    <scope>INTERACTION WITH ITGB1; ITGA3 AND CSPG4</scope>
    <scope>FUNCTION</scope>
</reference>
<reference key="10">
    <citation type="journal article" date="2006" name="Glycobiology">
        <title>Transport of galectin-3 between the nucleus and cytoplasm. II. Identification of the signal for nuclear export.</title>
        <authorList>
            <person name="Li S.Y."/>
            <person name="Davidson P.J."/>
            <person name="Lin N.Y."/>
            <person name="Patterson R.J."/>
            <person name="Wang J.L."/>
            <person name="Arnoys E.J."/>
        </authorList>
    </citation>
    <scope>SUBCELLULAR LOCATION</scope>
    <scope>NUCLEAR EXPORT SIGNAL</scope>
</reference>
<reference key="11">
    <citation type="journal article" date="2010" name="Cell">
        <title>A tissue-specific atlas of mouse protein phosphorylation and expression.</title>
        <authorList>
            <person name="Huttlin E.L."/>
            <person name="Jedrychowski M.P."/>
            <person name="Elias J.E."/>
            <person name="Goswami T."/>
            <person name="Rad R."/>
            <person name="Beausoleil S.A."/>
            <person name="Villen J."/>
            <person name="Haas W."/>
            <person name="Sowa M.E."/>
            <person name="Gygi S.P."/>
        </authorList>
    </citation>
    <scope>IDENTIFICATION BY MASS SPECTROMETRY [LARGE SCALE ANALYSIS]</scope>
    <source>
        <tissue>Kidney</tissue>
        <tissue>Lung</tissue>
        <tissue>Spleen</tissue>
    </source>
</reference>
<sequence length="264" mass="27515">MADSFSLNDALAGSGNPNPQGYPGAWGNQPGAGGYPGAAYPGAYPGQAPPGAYPGQAPPGAYPGQAPPSAYPGPTAPGAYPGPTAPGAYPGQPAPGAFPGQPGAPGAYPQCSGGYPAAGPYGVPAGPLTVPYDLPLPGGVMPRMLITIMGTVKPNANRIVLDFRRGNDVAFHFNPRFNENNRRVIVCNTKQDNNWGKEERQSAFPFESGKPFKIQVLVEADHFKVAVNDAHLLQYNHRMKNLREISQLGISGDITLTSANHAMI</sequence>
<name>LEG3_MOUSE</name>
<dbReference type="EMBL" id="X16834">
    <property type="protein sequence ID" value="CAA34736.1"/>
    <property type="molecule type" value="mRNA"/>
</dbReference>
<dbReference type="EMBL" id="J03723">
    <property type="protein sequence ID" value="AAA37311.1"/>
    <property type="molecule type" value="mRNA"/>
</dbReference>
<dbReference type="EMBL" id="X16074">
    <property type="protein sequence ID" value="CAA34206.1"/>
    <property type="molecule type" value="mRNA"/>
</dbReference>
<dbReference type="CCDS" id="CCDS26986.1"/>
<dbReference type="PIR" id="S08537">
    <property type="entry name" value="A28651"/>
</dbReference>
<dbReference type="PDB" id="7CXB">
    <property type="method" value="X-ray"/>
    <property type="resolution" value="1.46 A"/>
    <property type="chains" value="A=122-264"/>
</dbReference>
<dbReference type="PDB" id="7CXC">
    <property type="method" value="X-ray"/>
    <property type="resolution" value="1.40 A"/>
    <property type="chains" value="A/B=122-264"/>
</dbReference>
<dbReference type="PDB" id="7DF6">
    <property type="method" value="X-ray"/>
    <property type="resolution" value="1.80 A"/>
    <property type="chains" value="A/B=122-264"/>
</dbReference>
<dbReference type="PDB" id="8ILU">
    <property type="method" value="X-ray"/>
    <property type="resolution" value="1.80 A"/>
    <property type="chains" value="A/B=122-264"/>
</dbReference>
<dbReference type="PDB" id="8IU1">
    <property type="method" value="X-ray"/>
    <property type="resolution" value="1.97 A"/>
    <property type="chains" value="A=122-264"/>
</dbReference>
<dbReference type="PDBsum" id="7CXB"/>
<dbReference type="PDBsum" id="7CXC"/>
<dbReference type="PDBsum" id="7DF6"/>
<dbReference type="PDBsum" id="8ILU"/>
<dbReference type="PDBsum" id="8IU1"/>
<dbReference type="SMR" id="P16110"/>
<dbReference type="DIP" id="DIP-2152N"/>
<dbReference type="FunCoup" id="P16110">
    <property type="interactions" value="79"/>
</dbReference>
<dbReference type="IntAct" id="P16110">
    <property type="interactions" value="6"/>
</dbReference>
<dbReference type="STRING" id="10090.ENSMUSP00000118169"/>
<dbReference type="BindingDB" id="P16110"/>
<dbReference type="ChEMBL" id="CHEMBL3668"/>
<dbReference type="GlyGen" id="P16110">
    <property type="glycosylation" value="3 sites, 1 O-linked glycan (1 site)"/>
</dbReference>
<dbReference type="iPTMnet" id="P16110"/>
<dbReference type="PhosphoSitePlus" id="P16110"/>
<dbReference type="SwissPalm" id="P16110"/>
<dbReference type="jPOST" id="P16110"/>
<dbReference type="PaxDb" id="10090-ENSMUSP00000114350"/>
<dbReference type="PeptideAtlas" id="P16110"/>
<dbReference type="ProteomicsDB" id="286183"/>
<dbReference type="Pumba" id="P16110"/>
<dbReference type="ABCD" id="P16110">
    <property type="antibodies" value="1 sequenced antibody"/>
</dbReference>
<dbReference type="AGR" id="MGI:96778"/>
<dbReference type="MGI" id="MGI:96778">
    <property type="gene designation" value="Lgals3"/>
</dbReference>
<dbReference type="eggNOG" id="KOG3587">
    <property type="taxonomic scope" value="Eukaryota"/>
</dbReference>
<dbReference type="InParanoid" id="P16110"/>
<dbReference type="Reactome" id="R-MMU-6798695">
    <property type="pathway name" value="Neutrophil degranulation"/>
</dbReference>
<dbReference type="ChiTaRS" id="Lgals3">
    <property type="organism name" value="mouse"/>
</dbReference>
<dbReference type="PRO" id="PR:P16110"/>
<dbReference type="Proteomes" id="UP000000589">
    <property type="component" value="Unplaced"/>
</dbReference>
<dbReference type="RNAct" id="P16110">
    <property type="molecule type" value="protein"/>
</dbReference>
<dbReference type="GO" id="GO:0009986">
    <property type="term" value="C:cell surface"/>
    <property type="evidence" value="ECO:0000314"/>
    <property type="project" value="CACAO"/>
</dbReference>
<dbReference type="GO" id="GO:0062023">
    <property type="term" value="C:collagen-containing extracellular matrix"/>
    <property type="evidence" value="ECO:0007005"/>
    <property type="project" value="BHF-UCL"/>
</dbReference>
<dbReference type="GO" id="GO:0001533">
    <property type="term" value="C:cornified envelope"/>
    <property type="evidence" value="ECO:0000314"/>
    <property type="project" value="MGI"/>
</dbReference>
<dbReference type="GO" id="GO:0005737">
    <property type="term" value="C:cytoplasm"/>
    <property type="evidence" value="ECO:0000314"/>
    <property type="project" value="MGI"/>
</dbReference>
<dbReference type="GO" id="GO:0009897">
    <property type="term" value="C:external side of plasma membrane"/>
    <property type="evidence" value="ECO:0000314"/>
    <property type="project" value="MGI"/>
</dbReference>
<dbReference type="GO" id="GO:0031012">
    <property type="term" value="C:extracellular matrix"/>
    <property type="evidence" value="ECO:0000314"/>
    <property type="project" value="MGI"/>
</dbReference>
<dbReference type="GO" id="GO:0005576">
    <property type="term" value="C:extracellular region"/>
    <property type="evidence" value="ECO:0000304"/>
    <property type="project" value="Reactome"/>
</dbReference>
<dbReference type="GO" id="GO:0005615">
    <property type="term" value="C:extracellular space"/>
    <property type="evidence" value="ECO:0007005"/>
    <property type="project" value="BHF-UCL"/>
</dbReference>
<dbReference type="GO" id="GO:0097386">
    <property type="term" value="C:glial cell projection"/>
    <property type="evidence" value="ECO:0000314"/>
    <property type="project" value="MGI"/>
</dbReference>
<dbReference type="GO" id="GO:0001772">
    <property type="term" value="C:immunological synapse"/>
    <property type="evidence" value="ECO:0000314"/>
    <property type="project" value="BHF-UCL"/>
</dbReference>
<dbReference type="GO" id="GO:0005634">
    <property type="term" value="C:nucleus"/>
    <property type="evidence" value="ECO:0000314"/>
    <property type="project" value="MGI"/>
</dbReference>
<dbReference type="GO" id="GO:0005681">
    <property type="term" value="C:spliceosomal complex"/>
    <property type="evidence" value="ECO:0007669"/>
    <property type="project" value="UniProtKB-KW"/>
</dbReference>
<dbReference type="GO" id="GO:0030246">
    <property type="term" value="F:carbohydrate binding"/>
    <property type="evidence" value="ECO:0007669"/>
    <property type="project" value="UniProtKB-KW"/>
</dbReference>
<dbReference type="GO" id="GO:0019863">
    <property type="term" value="F:IgE binding"/>
    <property type="evidence" value="ECO:0007669"/>
    <property type="project" value="UniProtKB-KW"/>
</dbReference>
<dbReference type="GO" id="GO:0030154">
    <property type="term" value="P:cell differentiation"/>
    <property type="evidence" value="ECO:0007669"/>
    <property type="project" value="UniProtKB-KW"/>
</dbReference>
<dbReference type="GO" id="GO:0030198">
    <property type="term" value="P:extracellular matrix organization"/>
    <property type="evidence" value="ECO:0000316"/>
    <property type="project" value="MGI"/>
</dbReference>
<dbReference type="GO" id="GO:0045087">
    <property type="term" value="P:innate immune response"/>
    <property type="evidence" value="ECO:0007669"/>
    <property type="project" value="UniProtKB-KW"/>
</dbReference>
<dbReference type="GO" id="GO:0006397">
    <property type="term" value="P:mRNA processing"/>
    <property type="evidence" value="ECO:0007669"/>
    <property type="project" value="UniProtKB-KW"/>
</dbReference>
<dbReference type="GO" id="GO:0045806">
    <property type="term" value="P:negative regulation of endocytosis"/>
    <property type="evidence" value="ECO:0000315"/>
    <property type="project" value="BHF-UCL"/>
</dbReference>
<dbReference type="GO" id="GO:2000521">
    <property type="term" value="P:negative regulation of immunological synapse formation"/>
    <property type="evidence" value="ECO:0000315"/>
    <property type="project" value="BHF-UCL"/>
</dbReference>
<dbReference type="GO" id="GO:2001189">
    <property type="term" value="P:negative regulation of T cell activation via T cell receptor contact with antigen bound to MHC molecule on antigen presenting cell"/>
    <property type="evidence" value="ECO:0000315"/>
    <property type="project" value="BHF-UCL"/>
</dbReference>
<dbReference type="GO" id="GO:0050860">
    <property type="term" value="P:negative regulation of T cell receptor signaling pathway"/>
    <property type="evidence" value="ECO:0000315"/>
    <property type="project" value="BHF-UCL"/>
</dbReference>
<dbReference type="GO" id="GO:0008380">
    <property type="term" value="P:RNA splicing"/>
    <property type="evidence" value="ECO:0007669"/>
    <property type="project" value="UniProtKB-KW"/>
</dbReference>
<dbReference type="GO" id="GO:0001501">
    <property type="term" value="P:skeletal system development"/>
    <property type="evidence" value="ECO:0000316"/>
    <property type="project" value="MGI"/>
</dbReference>
<dbReference type="CDD" id="cd00070">
    <property type="entry name" value="GLECT"/>
    <property type="match status" value="1"/>
</dbReference>
<dbReference type="FunFam" id="2.60.120.200:FF:000023">
    <property type="entry name" value="Galectin"/>
    <property type="match status" value="1"/>
</dbReference>
<dbReference type="Gene3D" id="2.60.120.200">
    <property type="match status" value="1"/>
</dbReference>
<dbReference type="InterPro" id="IPR013320">
    <property type="entry name" value="ConA-like_dom_sf"/>
</dbReference>
<dbReference type="InterPro" id="IPR044156">
    <property type="entry name" value="Galectin-like"/>
</dbReference>
<dbReference type="InterPro" id="IPR001079">
    <property type="entry name" value="Galectin_CRD"/>
</dbReference>
<dbReference type="PANTHER" id="PTHR11346">
    <property type="entry name" value="GALECTIN"/>
    <property type="match status" value="1"/>
</dbReference>
<dbReference type="PANTHER" id="PTHR11346:SF26">
    <property type="entry name" value="GALECTIN-3"/>
    <property type="match status" value="1"/>
</dbReference>
<dbReference type="Pfam" id="PF00337">
    <property type="entry name" value="Gal-bind_lectin"/>
    <property type="match status" value="1"/>
</dbReference>
<dbReference type="SMART" id="SM00908">
    <property type="entry name" value="Gal-bind_lectin"/>
    <property type="match status" value="1"/>
</dbReference>
<dbReference type="SMART" id="SM00276">
    <property type="entry name" value="GLECT"/>
    <property type="match status" value="1"/>
</dbReference>
<dbReference type="SUPFAM" id="SSF49899">
    <property type="entry name" value="Concanavalin A-like lectins/glucanases"/>
    <property type="match status" value="1"/>
</dbReference>
<dbReference type="PROSITE" id="PS51304">
    <property type="entry name" value="GALECTIN"/>
    <property type="match status" value="1"/>
</dbReference>
<comment type="function">
    <text evidence="3 9">Galactose-specific lectin which binds IgE. May mediate with the alpha-3, beta-1 integrin the stimulation by CSPG4 of endothelial cells migration (PubMed:15181153). Together with DMBT1, required for terminal differentiation of columnar epithelial cells during early embryogenesis. In the nucleus: acts as a pre-mRNA splicing factor. Involved in acute inflammatory responses including neutrophil activation and adhesion, chemoattraction of monocytes macrophages, opsonization of apoptotic neutrophils, and activation of mast cells. Together with TRIM16, coordinates the recognition of membrane damage with mobilization of the core autophagy regulators ATG16L1 and BECN1 in response to damaged endomembranes (By similarity). When secreted, interacts with NK cell-activating receptor NCR3/NKp30 acting as an inhibitory ligand which antagonizes NK cell attack (By similarity).</text>
</comment>
<comment type="subunit">
    <text evidence="2 3 7 8 9">Probably forms homo- or heterodimers. Interacts with DMBT1 (By similarity). Interacts with CD6 and ALCAM. Forms a complex with the ITGA3, ITGB1 and CSPG4. Interacts with LGALS3BP, LYPD3, ZFTRAF1 and UACA. Interacts with TRIM16; this interaction mediates autophagy of damage endomembranes (By similarity). Interacts with and inhibits by binding NCR3/NKp30 (By similarity).</text>
</comment>
<comment type="interaction">
    <interactant intactId="EBI-3508325">
        <id>P16110</id>
    </interactant>
    <interactant intactId="EBI-8392424">
        <id>Q61362</id>
        <label>Chi3l1</label>
    </interactant>
    <organismsDiffer>false</organismsDiffer>
    <experiments>4</experiments>
</comment>
<comment type="interaction">
    <interactant intactId="EBI-3508325">
        <id>P16110</id>
    </interactant>
    <interactant intactId="EBI-20260800">
        <id>O88786</id>
        <label>Il13ra2</label>
    </interactant>
    <organismsDiffer>false</organismsDiffer>
    <experiments>2</experiments>
</comment>
<comment type="interaction">
    <interactant intactId="EBI-3508325">
        <id>P16110</id>
    </interactant>
    <interactant intactId="EBI-3508336">
        <id>Q9Z0P7</id>
        <label>Sufu</label>
    </interactant>
    <organismsDiffer>false</organismsDiffer>
    <experiments>5</experiments>
</comment>
<comment type="subcellular location">
    <subcellularLocation>
        <location evidence="3">Cytoplasm</location>
    </subcellularLocation>
    <subcellularLocation>
        <location evidence="3">Nucleus</location>
    </subcellularLocation>
    <subcellularLocation>
        <location evidence="3">Secreted</location>
    </subcellularLocation>
    <text evidence="3">Secreted by a non-classical secretory pathway and associates with the cell surface. Can be secreted; the secretion is dependent on protein unfolding and facilitated by the cargo receptor TMED10; it results in protein translocation from the cytoplasm into the ERGIC (endoplasmic reticulum-Golgi intermediate compartment) followed by vesicle entry and secretion.</text>
</comment>
<comment type="tissue specificity">
    <text>The highest levels are found in activated macrophages.</text>
</comment>
<keyword id="KW-0002">3D-structure</keyword>
<keyword id="KW-0007">Acetylation</keyword>
<keyword id="KW-0963">Cytoplasm</keyword>
<keyword id="KW-0221">Differentiation</keyword>
<keyword id="KW-0903">Direct protein sequencing</keyword>
<keyword id="KW-1015">Disulfide bond</keyword>
<keyword id="KW-0389">IgE-binding protein</keyword>
<keyword id="KW-0391">Immunity</keyword>
<keyword id="KW-0399">Innate immunity</keyword>
<keyword id="KW-0430">Lectin</keyword>
<keyword id="KW-0507">mRNA processing</keyword>
<keyword id="KW-0508">mRNA splicing</keyword>
<keyword id="KW-0539">Nucleus</keyword>
<keyword id="KW-0597">Phosphoprotein</keyword>
<keyword id="KW-1185">Reference proteome</keyword>
<keyword id="KW-0677">Repeat</keyword>
<keyword id="KW-0964">Secreted</keyword>
<keyword id="KW-0747">Spliceosome</keyword>
<evidence type="ECO:0000250" key="1"/>
<evidence type="ECO:0000250" key="2">
    <source>
        <dbReference type="UniProtKB" id="P08699"/>
    </source>
</evidence>
<evidence type="ECO:0000250" key="3">
    <source>
        <dbReference type="UniProtKB" id="P17931"/>
    </source>
</evidence>
<evidence type="ECO:0000250" key="4">
    <source>
        <dbReference type="UniProtKB" id="P38486"/>
    </source>
</evidence>
<evidence type="ECO:0000255" key="5">
    <source>
        <dbReference type="PROSITE-ProRule" id="PRU00639"/>
    </source>
</evidence>
<evidence type="ECO:0000256" key="6">
    <source>
        <dbReference type="SAM" id="MobiDB-lite"/>
    </source>
</evidence>
<evidence type="ECO:0000269" key="7">
    <source>
    </source>
</evidence>
<evidence type="ECO:0000269" key="8">
    <source>
    </source>
</evidence>
<evidence type="ECO:0000269" key="9">
    <source>
    </source>
</evidence>
<evidence type="ECO:0000269" key="10">
    <source>
    </source>
</evidence>
<evidence type="ECO:0000305" key="11"/>
<evidence type="ECO:0007829" key="12">
    <source>
        <dbReference type="PDB" id="7CXC"/>
    </source>
</evidence>
<organism>
    <name type="scientific">Mus musculus</name>
    <name type="common">Mouse</name>
    <dbReference type="NCBI Taxonomy" id="10090"/>
    <lineage>
        <taxon>Eukaryota</taxon>
        <taxon>Metazoa</taxon>
        <taxon>Chordata</taxon>
        <taxon>Craniata</taxon>
        <taxon>Vertebrata</taxon>
        <taxon>Euteleostomi</taxon>
        <taxon>Mammalia</taxon>
        <taxon>Eutheria</taxon>
        <taxon>Euarchontoglires</taxon>
        <taxon>Glires</taxon>
        <taxon>Rodentia</taxon>
        <taxon>Myomorpha</taxon>
        <taxon>Muroidea</taxon>
        <taxon>Muridae</taxon>
        <taxon>Murinae</taxon>
        <taxon>Mus</taxon>
        <taxon>Mus</taxon>
    </lineage>
</organism>
<feature type="initiator methionine" description="Removed" evidence="4">
    <location>
        <position position="1"/>
    </location>
</feature>
<feature type="chain" id="PRO_0000076931" description="Galectin-3">
    <location>
        <begin position="2"/>
        <end position="264"/>
    </location>
</feature>
<feature type="repeat" description="1">
    <location>
        <begin position="35"/>
        <end position="43"/>
    </location>
</feature>
<feature type="repeat" description="2">
    <location>
        <begin position="44"/>
        <end position="52"/>
    </location>
</feature>
<feature type="repeat" description="3">
    <location>
        <begin position="53"/>
        <end position="61"/>
    </location>
</feature>
<feature type="repeat" description="4">
    <location>
        <begin position="62"/>
        <end position="70"/>
    </location>
</feature>
<feature type="repeat" description="5">
    <location>
        <begin position="71"/>
        <end position="79"/>
    </location>
</feature>
<feature type="repeat" description="6">
    <location>
        <begin position="80"/>
        <end position="88"/>
    </location>
</feature>
<feature type="repeat" description="7">
    <location>
        <begin position="89"/>
        <end position="97"/>
    </location>
</feature>
<feature type="repeat" description="8">
    <location>
        <begin position="98"/>
        <end position="107"/>
    </location>
</feature>
<feature type="repeat" description="9; truncated">
    <location>
        <begin position="108"/>
        <end position="114"/>
    </location>
</feature>
<feature type="domain" description="Galectin" evidence="5">
    <location>
        <begin position="132"/>
        <end position="262"/>
    </location>
</feature>
<feature type="region of interest" description="Disordered" evidence="6">
    <location>
        <begin position="1"/>
        <end position="105"/>
    </location>
</feature>
<feature type="region of interest" description="9 X 9 AA tandem repeats of Y-P-G-X(3)-P-[GS]-A">
    <location>
        <begin position="35"/>
        <end position="114"/>
    </location>
</feature>
<feature type="short sequence motif" description="Nuclear export signal">
    <location>
        <begin position="240"/>
        <end position="255"/>
    </location>
</feature>
<feature type="compositionally biased region" description="Low complexity" evidence="6">
    <location>
        <begin position="37"/>
        <end position="46"/>
    </location>
</feature>
<feature type="compositionally biased region" description="Pro residues" evidence="6">
    <location>
        <begin position="47"/>
        <end position="75"/>
    </location>
</feature>
<feature type="compositionally biased region" description="Low complexity" evidence="6">
    <location>
        <begin position="76"/>
        <end position="105"/>
    </location>
</feature>
<feature type="binding site" evidence="1">
    <location>
        <begin position="195"/>
        <end position="201"/>
    </location>
    <ligand>
        <name>a beta-D-galactoside</name>
        <dbReference type="ChEBI" id="CHEBI:28034"/>
    </ligand>
</feature>
<feature type="modified residue" description="N-acetylalanine" evidence="4">
    <location>
        <position position="2"/>
    </location>
</feature>
<feature type="modified residue" description="Phosphoserine; by CK1" evidence="4">
    <location>
        <position position="6"/>
    </location>
</feature>
<feature type="modified residue" description="Phosphoserine" evidence="3">
    <location>
        <position position="202"/>
    </location>
</feature>
<feature type="disulfide bond" description="Interchain" evidence="10">
    <location>
        <position position="187"/>
    </location>
</feature>
<feature type="sequence conflict" description="In Ref. 2; AAA37311." evidence="11" ref="2">
    <original>A</original>
    <variation>R</variation>
    <location>
        <position position="2"/>
    </location>
</feature>
<feature type="sequence conflict" description="In Ref. 3; CAA34206." evidence="11" ref="3">
    <original>S</original>
    <variation>T</variation>
    <location>
        <position position="4"/>
    </location>
</feature>
<feature type="sequence conflict" description="In Ref. 3; CAA34206." evidence="11" ref="3">
    <original>QP</original>
    <variation>ST</variation>
    <location>
        <begin position="92"/>
        <end position="93"/>
    </location>
</feature>
<feature type="sequence conflict" description="In Ref. 3; CAA34206." evidence="11" ref="3">
    <original>QCS</original>
    <variation>SAP</variation>
    <location>
        <begin position="110"/>
        <end position="112"/>
    </location>
</feature>
<feature type="sequence conflict" description="In Ref. 2; AAA37311." evidence="11" ref="2">
    <original>G</original>
    <variation>R</variation>
    <location>
        <position position="252"/>
    </location>
</feature>
<feature type="strand" evidence="12">
    <location>
        <begin position="130"/>
        <end position="135"/>
    </location>
</feature>
<feature type="strand" evidence="12">
    <location>
        <begin position="144"/>
        <end position="152"/>
    </location>
</feature>
<feature type="strand" evidence="12">
    <location>
        <begin position="158"/>
        <end position="165"/>
    </location>
</feature>
<feature type="strand" evidence="12">
    <location>
        <begin position="168"/>
        <end position="179"/>
    </location>
</feature>
<feature type="strand" evidence="12">
    <location>
        <begin position="182"/>
        <end position="191"/>
    </location>
</feature>
<feature type="strand" evidence="12">
    <location>
        <begin position="199"/>
        <end position="201"/>
    </location>
</feature>
<feature type="strand" evidence="12">
    <location>
        <begin position="211"/>
        <end position="218"/>
    </location>
</feature>
<feature type="strand" evidence="12">
    <location>
        <begin position="220"/>
        <end position="227"/>
    </location>
</feature>
<feature type="strand" evidence="12">
    <location>
        <begin position="230"/>
        <end position="236"/>
    </location>
</feature>
<feature type="helix" evidence="12">
    <location>
        <begin position="242"/>
        <end position="244"/>
    </location>
</feature>
<feature type="strand" evidence="12">
    <location>
        <begin position="247"/>
        <end position="263"/>
    </location>
</feature>
<gene>
    <name type="primary">Lgals3</name>
</gene>
<proteinExistence type="evidence at protein level"/>
<protein>
    <recommendedName>
        <fullName>Galectin-3</fullName>
        <shortName>Gal-3</shortName>
    </recommendedName>
    <alternativeName>
        <fullName>35 kDa lectin</fullName>
    </alternativeName>
    <alternativeName>
        <fullName>Carbohydrate-binding protein 35</fullName>
        <shortName>CBP 35</shortName>
    </alternativeName>
    <alternativeName>
        <fullName>Galactose-specific lectin 3</fullName>
    </alternativeName>
    <alternativeName>
        <fullName>IgE-binding protein</fullName>
    </alternativeName>
    <alternativeName>
        <fullName>L-34 galactoside-binding lectin</fullName>
    </alternativeName>
    <alternativeName>
        <fullName>Laminin-binding protein</fullName>
    </alternativeName>
    <alternativeName>
        <fullName>Lectin L-29</fullName>
    </alternativeName>
    <alternativeName>
        <fullName>Mac-2 antigen</fullName>
    </alternativeName>
</protein>